<accession>Q6D673</accession>
<protein>
    <recommendedName>
        <fullName evidence="1">UPF0227 protein ECA1814</fullName>
    </recommendedName>
</protein>
<proteinExistence type="inferred from homology"/>
<keyword id="KW-1185">Reference proteome</keyword>
<organism>
    <name type="scientific">Pectobacterium atrosepticum (strain SCRI 1043 / ATCC BAA-672)</name>
    <name type="common">Erwinia carotovora subsp. atroseptica</name>
    <dbReference type="NCBI Taxonomy" id="218491"/>
    <lineage>
        <taxon>Bacteria</taxon>
        <taxon>Pseudomonadati</taxon>
        <taxon>Pseudomonadota</taxon>
        <taxon>Gammaproteobacteria</taxon>
        <taxon>Enterobacterales</taxon>
        <taxon>Pectobacteriaceae</taxon>
        <taxon>Pectobacterium</taxon>
    </lineage>
</organism>
<name>Y1814_PECAS</name>
<dbReference type="EMBL" id="BX950851">
    <property type="protein sequence ID" value="CAG74718.1"/>
    <property type="molecule type" value="Genomic_DNA"/>
</dbReference>
<dbReference type="RefSeq" id="WP_011093387.1">
    <property type="nucleotide sequence ID" value="NC_004547.2"/>
</dbReference>
<dbReference type="SMR" id="Q6D673"/>
<dbReference type="STRING" id="218491.ECA1814"/>
<dbReference type="ESTHER" id="erwct-q6d673">
    <property type="family name" value="abh_upf00227"/>
</dbReference>
<dbReference type="KEGG" id="eca:ECA1814"/>
<dbReference type="PATRIC" id="fig|218491.5.peg.1843"/>
<dbReference type="eggNOG" id="COG3150">
    <property type="taxonomic scope" value="Bacteria"/>
</dbReference>
<dbReference type="HOGENOM" id="CLU_128769_0_0_6"/>
<dbReference type="OrthoDB" id="6469735at2"/>
<dbReference type="Proteomes" id="UP000007966">
    <property type="component" value="Chromosome"/>
</dbReference>
<dbReference type="Gene3D" id="3.40.50.1820">
    <property type="entry name" value="alpha/beta hydrolase"/>
    <property type="match status" value="1"/>
</dbReference>
<dbReference type="HAMAP" id="MF_01047">
    <property type="entry name" value="UPF0227"/>
    <property type="match status" value="1"/>
</dbReference>
<dbReference type="InterPro" id="IPR029058">
    <property type="entry name" value="AB_hydrolase_fold"/>
</dbReference>
<dbReference type="InterPro" id="IPR022987">
    <property type="entry name" value="UPF0227"/>
</dbReference>
<dbReference type="InterPro" id="IPR008886">
    <property type="entry name" value="UPF0227/Esterase_YqiA"/>
</dbReference>
<dbReference type="NCBIfam" id="NF003431">
    <property type="entry name" value="PRK04940.1"/>
    <property type="match status" value="1"/>
</dbReference>
<dbReference type="PANTHER" id="PTHR35602">
    <property type="entry name" value="ESTERASE YQIA-RELATED"/>
    <property type="match status" value="1"/>
</dbReference>
<dbReference type="PANTHER" id="PTHR35602:SF2">
    <property type="entry name" value="UPF0227 PROTEIN YCFP"/>
    <property type="match status" value="1"/>
</dbReference>
<dbReference type="Pfam" id="PF05728">
    <property type="entry name" value="UPF0227"/>
    <property type="match status" value="1"/>
</dbReference>
<dbReference type="SUPFAM" id="SSF53474">
    <property type="entry name" value="alpha/beta-Hydrolases"/>
    <property type="match status" value="1"/>
</dbReference>
<feature type="chain" id="PRO_1000064291" description="UPF0227 protein ECA1814">
    <location>
        <begin position="1"/>
        <end position="180"/>
    </location>
</feature>
<comment type="similarity">
    <text evidence="1">Belongs to the UPF0227 family.</text>
</comment>
<evidence type="ECO:0000255" key="1">
    <source>
        <dbReference type="HAMAP-Rule" id="MF_01047"/>
    </source>
</evidence>
<gene>
    <name type="ordered locus">ECA1814</name>
</gene>
<sequence>MIIYLHGFDSTSPGNHEKVLQLQFIDEDVRLISYSTLHPRHDMQHLLKQVDKMIQHSDDDRSLICGVGLGGFWAERVGFLCDIRQVIVNPNLFPQENMSGKIDRPEEYLDIATKCVANFREKNRDRCMVMLSRQDEMLDSQRSAQTLGEYYEIVWDDIQTHKFKSISPHLQRIKAFKTLG</sequence>
<reference key="1">
    <citation type="journal article" date="2004" name="Proc. Natl. Acad. Sci. U.S.A.">
        <title>Genome sequence of the enterobacterial phytopathogen Erwinia carotovora subsp. atroseptica and characterization of virulence factors.</title>
        <authorList>
            <person name="Bell K.S."/>
            <person name="Sebaihia M."/>
            <person name="Pritchard L."/>
            <person name="Holden M.T.G."/>
            <person name="Hyman L.J."/>
            <person name="Holeva M.C."/>
            <person name="Thomson N.R."/>
            <person name="Bentley S.D."/>
            <person name="Churcher L.J.C."/>
            <person name="Mungall K."/>
            <person name="Atkin R."/>
            <person name="Bason N."/>
            <person name="Brooks K."/>
            <person name="Chillingworth T."/>
            <person name="Clark K."/>
            <person name="Doggett J."/>
            <person name="Fraser A."/>
            <person name="Hance Z."/>
            <person name="Hauser H."/>
            <person name="Jagels K."/>
            <person name="Moule S."/>
            <person name="Norbertczak H."/>
            <person name="Ormond D."/>
            <person name="Price C."/>
            <person name="Quail M.A."/>
            <person name="Sanders M."/>
            <person name="Walker D."/>
            <person name="Whitehead S."/>
            <person name="Salmond G.P.C."/>
            <person name="Birch P.R.J."/>
            <person name="Parkhill J."/>
            <person name="Toth I.K."/>
        </authorList>
    </citation>
    <scope>NUCLEOTIDE SEQUENCE [LARGE SCALE GENOMIC DNA]</scope>
    <source>
        <strain>SCRI 1043 / ATCC BAA-672</strain>
    </source>
</reference>